<name>SYH_CHLL2</name>
<gene>
    <name evidence="1" type="primary">hisS</name>
    <name type="ordered locus">Clim_0295</name>
</gene>
<accession>B3EFA6</accession>
<sequence>MPHYQVVKGARDIFPDEILQWKHVEGVIHRLAALYGFNEIRTPVFEYTELFQRSIGSSTDIVGKEMFSFLPDPSGRSITLRPEMTAGVMRAALQKNLLAAAPVQKLYYISELFRKERPQAGRQRQFSQFGAELLGVSSPAAVAEVITFMMHVFEDLGLQGLKLRINTLGNMDDRKRYRDALRNYLAPCYEQLDDASKERFEKNPLRILDSKNPEMQQIVKDAPKLYDYLGREALDDFEKVLFYLSARGIPFQIDHRLVRGLDYYSYTAFEVTSSALGAQDALGGGGRYDSLAVELGSSGEVPASGFAVGMERLLIAMQKQGLFSDLDAAAPSVFVIVQQEELFDQALEIVTTLRRAGISAVIDLAGRSMKAQLREANRMNAANALFVGSDELASGKCTMKDLRSSLQDEYFLEEIIDKFRKPEPLNRLRS</sequence>
<dbReference type="EC" id="6.1.1.21" evidence="1"/>
<dbReference type="EMBL" id="CP001097">
    <property type="protein sequence ID" value="ACD89389.1"/>
    <property type="molecule type" value="Genomic_DNA"/>
</dbReference>
<dbReference type="RefSeq" id="WP_012465270.1">
    <property type="nucleotide sequence ID" value="NC_010803.1"/>
</dbReference>
<dbReference type="SMR" id="B3EFA6"/>
<dbReference type="STRING" id="290315.Clim_0295"/>
<dbReference type="KEGG" id="cli:Clim_0295"/>
<dbReference type="eggNOG" id="COG0124">
    <property type="taxonomic scope" value="Bacteria"/>
</dbReference>
<dbReference type="HOGENOM" id="CLU_025113_1_1_10"/>
<dbReference type="OrthoDB" id="9800814at2"/>
<dbReference type="Proteomes" id="UP000008841">
    <property type="component" value="Chromosome"/>
</dbReference>
<dbReference type="GO" id="GO:0005737">
    <property type="term" value="C:cytoplasm"/>
    <property type="evidence" value="ECO:0007669"/>
    <property type="project" value="UniProtKB-SubCell"/>
</dbReference>
<dbReference type="GO" id="GO:0005524">
    <property type="term" value="F:ATP binding"/>
    <property type="evidence" value="ECO:0007669"/>
    <property type="project" value="UniProtKB-UniRule"/>
</dbReference>
<dbReference type="GO" id="GO:0004821">
    <property type="term" value="F:histidine-tRNA ligase activity"/>
    <property type="evidence" value="ECO:0007669"/>
    <property type="project" value="UniProtKB-UniRule"/>
</dbReference>
<dbReference type="GO" id="GO:0006427">
    <property type="term" value="P:histidyl-tRNA aminoacylation"/>
    <property type="evidence" value="ECO:0007669"/>
    <property type="project" value="UniProtKB-UniRule"/>
</dbReference>
<dbReference type="CDD" id="cd00773">
    <property type="entry name" value="HisRS-like_core"/>
    <property type="match status" value="1"/>
</dbReference>
<dbReference type="CDD" id="cd00859">
    <property type="entry name" value="HisRS_anticodon"/>
    <property type="match status" value="1"/>
</dbReference>
<dbReference type="Gene3D" id="3.40.50.800">
    <property type="entry name" value="Anticodon-binding domain"/>
    <property type="match status" value="1"/>
</dbReference>
<dbReference type="Gene3D" id="3.30.930.10">
    <property type="entry name" value="Bira Bifunctional Protein, Domain 2"/>
    <property type="match status" value="1"/>
</dbReference>
<dbReference type="HAMAP" id="MF_00127">
    <property type="entry name" value="His_tRNA_synth"/>
    <property type="match status" value="1"/>
</dbReference>
<dbReference type="InterPro" id="IPR006195">
    <property type="entry name" value="aa-tRNA-synth_II"/>
</dbReference>
<dbReference type="InterPro" id="IPR045864">
    <property type="entry name" value="aa-tRNA-synth_II/BPL/LPL"/>
</dbReference>
<dbReference type="InterPro" id="IPR004154">
    <property type="entry name" value="Anticodon-bd"/>
</dbReference>
<dbReference type="InterPro" id="IPR036621">
    <property type="entry name" value="Anticodon-bd_dom_sf"/>
</dbReference>
<dbReference type="InterPro" id="IPR015807">
    <property type="entry name" value="His-tRNA-ligase"/>
</dbReference>
<dbReference type="InterPro" id="IPR041715">
    <property type="entry name" value="HisRS-like_core"/>
</dbReference>
<dbReference type="InterPro" id="IPR004516">
    <property type="entry name" value="HisRS/HisZ"/>
</dbReference>
<dbReference type="InterPro" id="IPR033656">
    <property type="entry name" value="HisRS_anticodon"/>
</dbReference>
<dbReference type="NCBIfam" id="TIGR00442">
    <property type="entry name" value="hisS"/>
    <property type="match status" value="1"/>
</dbReference>
<dbReference type="PANTHER" id="PTHR43707:SF1">
    <property type="entry name" value="HISTIDINE--TRNA LIGASE, MITOCHONDRIAL-RELATED"/>
    <property type="match status" value="1"/>
</dbReference>
<dbReference type="PANTHER" id="PTHR43707">
    <property type="entry name" value="HISTIDYL-TRNA SYNTHETASE"/>
    <property type="match status" value="1"/>
</dbReference>
<dbReference type="Pfam" id="PF03129">
    <property type="entry name" value="HGTP_anticodon"/>
    <property type="match status" value="1"/>
</dbReference>
<dbReference type="Pfam" id="PF13393">
    <property type="entry name" value="tRNA-synt_His"/>
    <property type="match status" value="1"/>
</dbReference>
<dbReference type="PIRSF" id="PIRSF001549">
    <property type="entry name" value="His-tRNA_synth"/>
    <property type="match status" value="1"/>
</dbReference>
<dbReference type="SUPFAM" id="SSF52954">
    <property type="entry name" value="Class II aaRS ABD-related"/>
    <property type="match status" value="1"/>
</dbReference>
<dbReference type="SUPFAM" id="SSF55681">
    <property type="entry name" value="Class II aaRS and biotin synthetases"/>
    <property type="match status" value="1"/>
</dbReference>
<dbReference type="PROSITE" id="PS50862">
    <property type="entry name" value="AA_TRNA_LIGASE_II"/>
    <property type="match status" value="1"/>
</dbReference>
<proteinExistence type="inferred from homology"/>
<reference key="1">
    <citation type="submission" date="2008-05" db="EMBL/GenBank/DDBJ databases">
        <title>Complete sequence of Chlorobium limicola DSM 245.</title>
        <authorList>
            <consortium name="US DOE Joint Genome Institute"/>
            <person name="Lucas S."/>
            <person name="Copeland A."/>
            <person name="Lapidus A."/>
            <person name="Glavina del Rio T."/>
            <person name="Dalin E."/>
            <person name="Tice H."/>
            <person name="Bruce D."/>
            <person name="Goodwin L."/>
            <person name="Pitluck S."/>
            <person name="Schmutz J."/>
            <person name="Larimer F."/>
            <person name="Land M."/>
            <person name="Hauser L."/>
            <person name="Kyrpides N."/>
            <person name="Ovchinnikova G."/>
            <person name="Zhao F."/>
            <person name="Li T."/>
            <person name="Liu Z."/>
            <person name="Overmann J."/>
            <person name="Bryant D.A."/>
            <person name="Richardson P."/>
        </authorList>
    </citation>
    <scope>NUCLEOTIDE SEQUENCE [LARGE SCALE GENOMIC DNA]</scope>
    <source>
        <strain>DSM 245 / NBRC 103803 / 6330</strain>
    </source>
</reference>
<organism>
    <name type="scientific">Chlorobium limicola (strain DSM 245 / NBRC 103803 / 6330)</name>
    <dbReference type="NCBI Taxonomy" id="290315"/>
    <lineage>
        <taxon>Bacteria</taxon>
        <taxon>Pseudomonadati</taxon>
        <taxon>Chlorobiota</taxon>
        <taxon>Chlorobiia</taxon>
        <taxon>Chlorobiales</taxon>
        <taxon>Chlorobiaceae</taxon>
        <taxon>Chlorobium/Pelodictyon group</taxon>
        <taxon>Chlorobium</taxon>
    </lineage>
</organism>
<protein>
    <recommendedName>
        <fullName evidence="1">Histidine--tRNA ligase</fullName>
        <ecNumber evidence="1">6.1.1.21</ecNumber>
    </recommendedName>
    <alternativeName>
        <fullName evidence="1">Histidyl-tRNA synthetase</fullName>
        <shortName evidence="1">HisRS</shortName>
    </alternativeName>
</protein>
<keyword id="KW-0030">Aminoacyl-tRNA synthetase</keyword>
<keyword id="KW-0067">ATP-binding</keyword>
<keyword id="KW-0963">Cytoplasm</keyword>
<keyword id="KW-0436">Ligase</keyword>
<keyword id="KW-0547">Nucleotide-binding</keyword>
<keyword id="KW-0648">Protein biosynthesis</keyword>
<feature type="chain" id="PRO_1000095536" description="Histidine--tRNA ligase">
    <location>
        <begin position="1"/>
        <end position="430"/>
    </location>
</feature>
<evidence type="ECO:0000255" key="1">
    <source>
        <dbReference type="HAMAP-Rule" id="MF_00127"/>
    </source>
</evidence>
<comment type="catalytic activity">
    <reaction evidence="1">
        <text>tRNA(His) + L-histidine + ATP = L-histidyl-tRNA(His) + AMP + diphosphate + H(+)</text>
        <dbReference type="Rhea" id="RHEA:17313"/>
        <dbReference type="Rhea" id="RHEA-COMP:9665"/>
        <dbReference type="Rhea" id="RHEA-COMP:9689"/>
        <dbReference type="ChEBI" id="CHEBI:15378"/>
        <dbReference type="ChEBI" id="CHEBI:30616"/>
        <dbReference type="ChEBI" id="CHEBI:33019"/>
        <dbReference type="ChEBI" id="CHEBI:57595"/>
        <dbReference type="ChEBI" id="CHEBI:78442"/>
        <dbReference type="ChEBI" id="CHEBI:78527"/>
        <dbReference type="ChEBI" id="CHEBI:456215"/>
        <dbReference type="EC" id="6.1.1.21"/>
    </reaction>
</comment>
<comment type="subunit">
    <text evidence="1">Homodimer.</text>
</comment>
<comment type="subcellular location">
    <subcellularLocation>
        <location evidence="1">Cytoplasm</location>
    </subcellularLocation>
</comment>
<comment type="similarity">
    <text evidence="1">Belongs to the class-II aminoacyl-tRNA synthetase family.</text>
</comment>